<sequence length="312" mass="33715">MKWSEISIHTTEEAVEAVSHILHEAGASGVAIEDPAELTKEREQQYGEIYALNPDEYPAEGVLIKAYFPQTDSLHETIAGVKSSIDVLPSYDIEIGTGNITVNEVNEEDWATAWKKYYHPVQISDTFTIVPTWEEYTPSSPEEKIIELDPGMAFGTGTHPTTTMCIRALEKTVQPGDTIIDVGTGSGVLSIAAAKLGASSVQAYDLDPVAVESAEMNVRLNKTDDVVSVGQNSLLEGIEGPVDLIVANLLAEIILLFPEDAARVVKSGGLFITSGIIAAKEKVISEALEKAGFTIEEVLRMEDWVAIIARNA</sequence>
<proteinExistence type="inferred from homology"/>
<gene>
    <name evidence="1" type="primary">prmA</name>
    <name type="ordered locus">BCAH820_4334</name>
</gene>
<keyword id="KW-0963">Cytoplasm</keyword>
<keyword id="KW-0489">Methyltransferase</keyword>
<keyword id="KW-0949">S-adenosyl-L-methionine</keyword>
<keyword id="KW-0808">Transferase</keyword>
<name>PRMA_BACC0</name>
<organism>
    <name type="scientific">Bacillus cereus (strain AH820)</name>
    <dbReference type="NCBI Taxonomy" id="405535"/>
    <lineage>
        <taxon>Bacteria</taxon>
        <taxon>Bacillati</taxon>
        <taxon>Bacillota</taxon>
        <taxon>Bacilli</taxon>
        <taxon>Bacillales</taxon>
        <taxon>Bacillaceae</taxon>
        <taxon>Bacillus</taxon>
        <taxon>Bacillus cereus group</taxon>
    </lineage>
</organism>
<evidence type="ECO:0000255" key="1">
    <source>
        <dbReference type="HAMAP-Rule" id="MF_00735"/>
    </source>
</evidence>
<comment type="function">
    <text evidence="1">Methylates ribosomal protein L11.</text>
</comment>
<comment type="catalytic activity">
    <reaction evidence="1">
        <text>L-lysyl-[protein] + 3 S-adenosyl-L-methionine = N(6),N(6),N(6)-trimethyl-L-lysyl-[protein] + 3 S-adenosyl-L-homocysteine + 3 H(+)</text>
        <dbReference type="Rhea" id="RHEA:54192"/>
        <dbReference type="Rhea" id="RHEA-COMP:9752"/>
        <dbReference type="Rhea" id="RHEA-COMP:13826"/>
        <dbReference type="ChEBI" id="CHEBI:15378"/>
        <dbReference type="ChEBI" id="CHEBI:29969"/>
        <dbReference type="ChEBI" id="CHEBI:57856"/>
        <dbReference type="ChEBI" id="CHEBI:59789"/>
        <dbReference type="ChEBI" id="CHEBI:61961"/>
    </reaction>
</comment>
<comment type="subcellular location">
    <subcellularLocation>
        <location evidence="1">Cytoplasm</location>
    </subcellularLocation>
</comment>
<comment type="similarity">
    <text evidence="1">Belongs to the methyltransferase superfamily. PrmA family.</text>
</comment>
<reference key="1">
    <citation type="submission" date="2008-10" db="EMBL/GenBank/DDBJ databases">
        <title>Genome sequence of Bacillus cereus AH820.</title>
        <authorList>
            <person name="Dodson R.J."/>
            <person name="Durkin A.S."/>
            <person name="Rosovitz M.J."/>
            <person name="Rasko D.A."/>
            <person name="Hoffmaster A."/>
            <person name="Ravel J."/>
            <person name="Sutton G."/>
        </authorList>
    </citation>
    <scope>NUCLEOTIDE SEQUENCE [LARGE SCALE GENOMIC DNA]</scope>
    <source>
        <strain>AH820</strain>
    </source>
</reference>
<protein>
    <recommendedName>
        <fullName evidence="1">Ribosomal protein L11 methyltransferase</fullName>
        <shortName evidence="1">L11 Mtase</shortName>
        <ecNumber evidence="1">2.1.1.-</ecNumber>
    </recommendedName>
</protein>
<accession>B7JN37</accession>
<dbReference type="EC" id="2.1.1.-" evidence="1"/>
<dbReference type="EMBL" id="CP001283">
    <property type="protein sequence ID" value="ACK89570.1"/>
    <property type="molecule type" value="Genomic_DNA"/>
</dbReference>
<dbReference type="RefSeq" id="WP_000872105.1">
    <property type="nucleotide sequence ID" value="NC_011773.1"/>
</dbReference>
<dbReference type="SMR" id="B7JN37"/>
<dbReference type="GeneID" id="45024189"/>
<dbReference type="KEGG" id="bcu:BCAH820_4334"/>
<dbReference type="HOGENOM" id="CLU_049382_0_1_9"/>
<dbReference type="Proteomes" id="UP000001363">
    <property type="component" value="Chromosome"/>
</dbReference>
<dbReference type="GO" id="GO:0005737">
    <property type="term" value="C:cytoplasm"/>
    <property type="evidence" value="ECO:0007669"/>
    <property type="project" value="UniProtKB-SubCell"/>
</dbReference>
<dbReference type="GO" id="GO:0016279">
    <property type="term" value="F:protein-lysine N-methyltransferase activity"/>
    <property type="evidence" value="ECO:0007669"/>
    <property type="project" value="RHEA"/>
</dbReference>
<dbReference type="GO" id="GO:0032259">
    <property type="term" value="P:methylation"/>
    <property type="evidence" value="ECO:0007669"/>
    <property type="project" value="UniProtKB-KW"/>
</dbReference>
<dbReference type="CDD" id="cd02440">
    <property type="entry name" value="AdoMet_MTases"/>
    <property type="match status" value="1"/>
</dbReference>
<dbReference type="Gene3D" id="3.40.50.150">
    <property type="entry name" value="Vaccinia Virus protein VP39"/>
    <property type="match status" value="1"/>
</dbReference>
<dbReference type="HAMAP" id="MF_00735">
    <property type="entry name" value="Methyltr_PrmA"/>
    <property type="match status" value="1"/>
</dbReference>
<dbReference type="InterPro" id="IPR050078">
    <property type="entry name" value="Ribosomal_L11_MeTrfase_PrmA"/>
</dbReference>
<dbReference type="InterPro" id="IPR004498">
    <property type="entry name" value="Ribosomal_PrmA_MeTrfase"/>
</dbReference>
<dbReference type="InterPro" id="IPR029063">
    <property type="entry name" value="SAM-dependent_MTases_sf"/>
</dbReference>
<dbReference type="NCBIfam" id="TIGR00406">
    <property type="entry name" value="prmA"/>
    <property type="match status" value="1"/>
</dbReference>
<dbReference type="PANTHER" id="PTHR43648">
    <property type="entry name" value="ELECTRON TRANSFER FLAVOPROTEIN BETA SUBUNIT LYSINE METHYLTRANSFERASE"/>
    <property type="match status" value="1"/>
</dbReference>
<dbReference type="PANTHER" id="PTHR43648:SF1">
    <property type="entry name" value="ELECTRON TRANSFER FLAVOPROTEIN BETA SUBUNIT LYSINE METHYLTRANSFERASE"/>
    <property type="match status" value="1"/>
</dbReference>
<dbReference type="Pfam" id="PF06325">
    <property type="entry name" value="PrmA"/>
    <property type="match status" value="1"/>
</dbReference>
<dbReference type="PIRSF" id="PIRSF000401">
    <property type="entry name" value="RPL11_MTase"/>
    <property type="match status" value="1"/>
</dbReference>
<dbReference type="SUPFAM" id="SSF53335">
    <property type="entry name" value="S-adenosyl-L-methionine-dependent methyltransferases"/>
    <property type="match status" value="1"/>
</dbReference>
<feature type="chain" id="PRO_1000192581" description="Ribosomal protein L11 methyltransferase">
    <location>
        <begin position="1"/>
        <end position="312"/>
    </location>
</feature>
<feature type="binding site" evidence="1">
    <location>
        <position position="162"/>
    </location>
    <ligand>
        <name>S-adenosyl-L-methionine</name>
        <dbReference type="ChEBI" id="CHEBI:59789"/>
    </ligand>
</feature>
<feature type="binding site" evidence="1">
    <location>
        <position position="183"/>
    </location>
    <ligand>
        <name>S-adenosyl-L-methionine</name>
        <dbReference type="ChEBI" id="CHEBI:59789"/>
    </ligand>
</feature>
<feature type="binding site" evidence="1">
    <location>
        <position position="205"/>
    </location>
    <ligand>
        <name>S-adenosyl-L-methionine</name>
        <dbReference type="ChEBI" id="CHEBI:59789"/>
    </ligand>
</feature>
<feature type="binding site" evidence="1">
    <location>
        <position position="248"/>
    </location>
    <ligand>
        <name>S-adenosyl-L-methionine</name>
        <dbReference type="ChEBI" id="CHEBI:59789"/>
    </ligand>
</feature>